<sequence length="75" mass="9389">MITREMIDRINFLYHKSQTEGLTEEEKEEQKRLRQEYVKEIKERVRRELESIKYANNSCEHCGHDHHHHHHHHRH</sequence>
<dbReference type="EMBL" id="CP000924">
    <property type="protein sequence ID" value="ABY93995.1"/>
    <property type="molecule type" value="Genomic_DNA"/>
</dbReference>
<dbReference type="RefSeq" id="WP_009052976.1">
    <property type="nucleotide sequence ID" value="NC_010321.1"/>
</dbReference>
<dbReference type="SMR" id="B0KCF2"/>
<dbReference type="STRING" id="340099.Teth39_0326"/>
<dbReference type="KEGG" id="tpd:Teth39_0326"/>
<dbReference type="eggNOG" id="COG4224">
    <property type="taxonomic scope" value="Bacteria"/>
</dbReference>
<dbReference type="HOGENOM" id="CLU_173137_2_0_9"/>
<dbReference type="Proteomes" id="UP000002156">
    <property type="component" value="Chromosome"/>
</dbReference>
<dbReference type="GO" id="GO:0005737">
    <property type="term" value="C:cytoplasm"/>
    <property type="evidence" value="ECO:0007669"/>
    <property type="project" value="UniProtKB-SubCell"/>
</dbReference>
<dbReference type="Gene3D" id="1.10.287.540">
    <property type="entry name" value="Helix hairpin bin"/>
    <property type="match status" value="1"/>
</dbReference>
<dbReference type="HAMAP" id="MF_01103">
    <property type="entry name" value="UPF0291"/>
    <property type="match status" value="1"/>
</dbReference>
<dbReference type="InterPro" id="IPR009242">
    <property type="entry name" value="DUF896"/>
</dbReference>
<dbReference type="PANTHER" id="PTHR37300">
    <property type="entry name" value="UPF0291 PROTEIN CBO2609/CLC_2481"/>
    <property type="match status" value="1"/>
</dbReference>
<dbReference type="PANTHER" id="PTHR37300:SF1">
    <property type="entry name" value="UPF0291 PROTEIN YNZC"/>
    <property type="match status" value="1"/>
</dbReference>
<dbReference type="Pfam" id="PF05979">
    <property type="entry name" value="DUF896"/>
    <property type="match status" value="1"/>
</dbReference>
<dbReference type="SUPFAM" id="SSF158221">
    <property type="entry name" value="YnzC-like"/>
    <property type="match status" value="1"/>
</dbReference>
<gene>
    <name type="ordered locus">Teth39_0326</name>
</gene>
<feature type="chain" id="PRO_1000137020" description="UPF0291 protein Teth39_0326">
    <location>
        <begin position="1"/>
        <end position="75"/>
    </location>
</feature>
<keyword id="KW-0963">Cytoplasm</keyword>
<keyword id="KW-1185">Reference proteome</keyword>
<accession>B0KCF2</accession>
<comment type="subcellular location">
    <subcellularLocation>
        <location evidence="1">Cytoplasm</location>
    </subcellularLocation>
</comment>
<comment type="similarity">
    <text evidence="1">Belongs to the UPF0291 family.</text>
</comment>
<proteinExistence type="inferred from homology"/>
<reference key="1">
    <citation type="submission" date="2008-01" db="EMBL/GenBank/DDBJ databases">
        <title>Complete sequence of Thermoanaerobacter pseudethanolicus 39E.</title>
        <authorList>
            <person name="Copeland A."/>
            <person name="Lucas S."/>
            <person name="Lapidus A."/>
            <person name="Barry K."/>
            <person name="Glavina del Rio T."/>
            <person name="Dalin E."/>
            <person name="Tice H."/>
            <person name="Pitluck S."/>
            <person name="Bruce D."/>
            <person name="Goodwin L."/>
            <person name="Saunders E."/>
            <person name="Brettin T."/>
            <person name="Detter J.C."/>
            <person name="Han C."/>
            <person name="Schmutz J."/>
            <person name="Larimer F."/>
            <person name="Land M."/>
            <person name="Hauser L."/>
            <person name="Kyrpides N."/>
            <person name="Lykidis A."/>
            <person name="Hemme C."/>
            <person name="Fields M.W."/>
            <person name="He Z."/>
            <person name="Zhou J."/>
            <person name="Richardson P."/>
        </authorList>
    </citation>
    <scope>NUCLEOTIDE SEQUENCE [LARGE SCALE GENOMIC DNA]</scope>
    <source>
        <strain>ATCC 33223 / DSM 2355 / 39E</strain>
    </source>
</reference>
<organism>
    <name type="scientific">Thermoanaerobacter pseudethanolicus (strain ATCC 33223 / 39E)</name>
    <name type="common">Clostridium thermohydrosulfuricum</name>
    <dbReference type="NCBI Taxonomy" id="340099"/>
    <lineage>
        <taxon>Bacteria</taxon>
        <taxon>Bacillati</taxon>
        <taxon>Bacillota</taxon>
        <taxon>Clostridia</taxon>
        <taxon>Thermoanaerobacterales</taxon>
        <taxon>Thermoanaerobacteraceae</taxon>
        <taxon>Thermoanaerobacter</taxon>
    </lineage>
</organism>
<name>Y326_THEP3</name>
<evidence type="ECO:0000255" key="1">
    <source>
        <dbReference type="HAMAP-Rule" id="MF_01103"/>
    </source>
</evidence>
<protein>
    <recommendedName>
        <fullName evidence="1">UPF0291 protein Teth39_0326</fullName>
    </recommendedName>
</protein>